<reference key="1">
    <citation type="journal article" date="1992" name="Nucleic Acids Res.">
        <title>Cloning and sequence analysis of the StsI restriction-modification gene: presence of homology to FokI restriction-modification enzymes.</title>
        <authorList>
            <person name="Kita K."/>
            <person name="Suisha M."/>
            <person name="Kotani H."/>
            <person name="Yanase H."/>
            <person name="Kato N."/>
        </authorList>
    </citation>
    <scope>NUCLEOTIDE SEQUENCE [GENOMIC DNA]</scope>
    <scope>PROTEIN SEQUENCE OF 2-22</scope>
    <scope>FUNCTION</scope>
    <source>
        <strain>54</strain>
    </source>
</reference>
<reference key="2">
    <citation type="journal article" date="2003" name="Nucleic Acids Res.">
        <title>A nomenclature for restriction enzymes, DNA methyltransferases, homing endonucleases and their genes.</title>
        <authorList>
            <person name="Roberts R.J."/>
            <person name="Belfort M."/>
            <person name="Bestor T."/>
            <person name="Bhagwat A.S."/>
            <person name="Bickle T.A."/>
            <person name="Bitinaite J."/>
            <person name="Blumenthal R.M."/>
            <person name="Degtyarev S.K."/>
            <person name="Dryden D.T."/>
            <person name="Dybvig K."/>
            <person name="Firman K."/>
            <person name="Gromova E.S."/>
            <person name="Gumport R.I."/>
            <person name="Halford S.E."/>
            <person name="Hattman S."/>
            <person name="Heitman J."/>
            <person name="Hornby D.P."/>
            <person name="Janulaitis A."/>
            <person name="Jeltsch A."/>
            <person name="Josephsen J."/>
            <person name="Kiss A."/>
            <person name="Klaenhammer T.R."/>
            <person name="Kobayashi I."/>
            <person name="Kong H."/>
            <person name="Krueger D.H."/>
            <person name="Lacks S."/>
            <person name="Marinus M.G."/>
            <person name="Miyahara M."/>
            <person name="Morgan R.D."/>
            <person name="Murray N.E."/>
            <person name="Nagaraja V."/>
            <person name="Piekarowicz A."/>
            <person name="Pingoud A."/>
            <person name="Raleigh E."/>
            <person name="Rao D.N."/>
            <person name="Reich N."/>
            <person name="Repin V.E."/>
            <person name="Selker E.U."/>
            <person name="Shaw P.C."/>
            <person name="Stein D.C."/>
            <person name="Stoddard B.L."/>
            <person name="Szybalski W."/>
            <person name="Trautner T.A."/>
            <person name="Van Etten J.L."/>
            <person name="Vitor J.M."/>
            <person name="Wilson G.G."/>
            <person name="Xu S.Y."/>
        </authorList>
    </citation>
    <scope>NOMENCLATURE</scope>
    <scope>SUBTYPE</scope>
</reference>
<organism>
    <name type="scientific">Streptococcus sanguinis</name>
    <dbReference type="NCBI Taxonomy" id="1305"/>
    <lineage>
        <taxon>Bacteria</taxon>
        <taxon>Bacillati</taxon>
        <taxon>Bacillota</taxon>
        <taxon>Bacilli</taxon>
        <taxon>Lactobacillales</taxon>
        <taxon>Streptococcaceae</taxon>
        <taxon>Streptococcus</taxon>
    </lineage>
</organism>
<keyword id="KW-0903">Direct protein sequencing</keyword>
<keyword id="KW-0255">Endonuclease</keyword>
<keyword id="KW-0378">Hydrolase</keyword>
<keyword id="KW-0540">Nuclease</keyword>
<keyword id="KW-0680">Restriction system</keyword>
<feature type="initiator methionine" description="Removed" evidence="1">
    <location>
        <position position="1"/>
    </location>
</feature>
<feature type="chain" id="PRO_0000077368" description="Type II restriction enzyme StsI">
    <location>
        <begin position="2"/>
        <end position="602"/>
    </location>
</feature>
<proteinExistence type="evidence at protein level"/>
<comment type="function">
    <text evidence="2 3">An S subtype restriction enzyme that recognizes the double-stranded sequences 5'-GGATG-3' and 3'-CATCC-5' and cleaves respectively 15 bases after G-1 and 14 bases before C-1.</text>
</comment>
<comment type="catalytic activity">
    <reaction>
        <text>Endonucleolytic cleavage of DNA to give specific double-stranded fragments with terminal 5'-phosphates.</text>
        <dbReference type="EC" id="3.1.21.4"/>
    </reaction>
</comment>
<name>T2S1_STRSA</name>
<protein>
    <recommendedName>
        <fullName evidence="2">Type II restriction enzyme StsI</fullName>
        <shortName>R.StsI</shortName>
        <ecNumber>3.1.21.4</ecNumber>
    </recommendedName>
    <alternativeName>
        <fullName>Endonuclease StsI</fullName>
    </alternativeName>
    <alternativeName>
        <fullName>Type-2 restriction enzyme StsI</fullName>
    </alternativeName>
</protein>
<evidence type="ECO:0000269" key="1">
    <source>
    </source>
</evidence>
<evidence type="ECO:0000303" key="2">
    <source>
    </source>
</evidence>
<evidence type="ECO:0000305" key="3">
    <source>
    </source>
</evidence>
<dbReference type="EC" id="3.1.21.4"/>
<dbReference type="EMBL" id="D11101">
    <property type="protein sequence ID" value="BAA01875.1"/>
    <property type="molecule type" value="Genomic_DNA"/>
</dbReference>
<dbReference type="PIR" id="S35495">
    <property type="entry name" value="S35495"/>
</dbReference>
<dbReference type="SMR" id="P29346"/>
<dbReference type="REBASE" id="1784">
    <property type="entry name" value="StsI"/>
</dbReference>
<dbReference type="PRO" id="PR:P29346"/>
<dbReference type="GO" id="GO:0003677">
    <property type="term" value="F:DNA binding"/>
    <property type="evidence" value="ECO:0007669"/>
    <property type="project" value="InterPro"/>
</dbReference>
<dbReference type="GO" id="GO:0009036">
    <property type="term" value="F:type II site-specific deoxyribonuclease activity"/>
    <property type="evidence" value="ECO:0007669"/>
    <property type="project" value="UniProtKB-EC"/>
</dbReference>
<dbReference type="GO" id="GO:0009307">
    <property type="term" value="P:DNA restriction-modification system"/>
    <property type="evidence" value="ECO:0007669"/>
    <property type="project" value="UniProtKB-KW"/>
</dbReference>
<dbReference type="CDD" id="cd00941">
    <property type="entry name" value="FokI_N"/>
    <property type="match status" value="1"/>
</dbReference>
<dbReference type="CDD" id="cd22327">
    <property type="entry name" value="FokI_nuclease-like"/>
    <property type="match status" value="1"/>
</dbReference>
<dbReference type="Gene3D" id="3.40.91.30">
    <property type="match status" value="1"/>
</dbReference>
<dbReference type="Gene3D" id="3.90.241.10">
    <property type="entry name" value="Foki Restriction Endonuclease, Chain A, domain 1"/>
    <property type="match status" value="1"/>
</dbReference>
<dbReference type="Gene3D" id="1.10.10.10">
    <property type="entry name" value="Winged helix-like DNA-binding domain superfamily/Winged helix DNA-binding domain"/>
    <property type="match status" value="1"/>
</dbReference>
<dbReference type="InterPro" id="IPR015334">
    <property type="entry name" value="FokI_cleavage_dom"/>
</dbReference>
<dbReference type="InterPro" id="IPR004234">
    <property type="entry name" value="FokI_D1"/>
</dbReference>
<dbReference type="InterPro" id="IPR004233">
    <property type="entry name" value="FokI_D2"/>
</dbReference>
<dbReference type="InterPro" id="IPR044945">
    <property type="entry name" value="FokI_dom_1_2"/>
</dbReference>
<dbReference type="InterPro" id="IPR011335">
    <property type="entry name" value="Restrct_endonuc-II-like"/>
</dbReference>
<dbReference type="InterPro" id="IPR036388">
    <property type="entry name" value="WH-like_DNA-bd_sf"/>
</dbReference>
<dbReference type="InterPro" id="IPR036390">
    <property type="entry name" value="WH_DNA-bd_sf"/>
</dbReference>
<dbReference type="Pfam" id="PF09254">
    <property type="entry name" value="FokI_cleav_dom"/>
    <property type="match status" value="1"/>
</dbReference>
<dbReference type="Pfam" id="PF02981">
    <property type="entry name" value="FokI_D1"/>
    <property type="match status" value="1"/>
</dbReference>
<dbReference type="Pfam" id="PF02980">
    <property type="entry name" value="FokI_dom_2"/>
    <property type="match status" value="1"/>
</dbReference>
<dbReference type="SUPFAM" id="SSF52980">
    <property type="entry name" value="Restriction endonuclease-like"/>
    <property type="match status" value="1"/>
</dbReference>
<dbReference type="SUPFAM" id="SSF46785">
    <property type="entry name" value="Winged helix' DNA-binding domain"/>
    <property type="match status" value="3"/>
</dbReference>
<accession>P29346</accession>
<sequence length="602" mass="68392">MTISINEYSDLNNLAFGLGQDVSQDLKELVKVASIFMPDSKIHKWLIDTRLEEVVTDLNLRYELKSVITNTPISVTWKQLTGTRTKREANSLVQAVFPGQCSRLAIVDWAAKNYVSVAVAFGLLKFHRADKTFTISEIGIQAVKLYDSEELAELDKFLYERLLEYPYAAWLIRLLGNQPSKQFSKFDLGEHFGFIDELGFETAPIEIFLNGLAQAEIDGDKTAAQKIKSNFESTSDKYMRWLAGVLVTAGLATSTTKKVTHTYKNRKFELTLGTVYQITAKGLTALKEVNGKSRYPRSRKRVMWEFLATKDKEAIAKKTSRSLMLKHLTEKKNPIQAEVIATLINTDYPTLEITPEEVIDDCIGLNRIGIEILIDGDKLTLNDKLFDFEIPVQKDVVLEKSDIEKFKNQLRTELTNIDHSYLKGIDIASKKKTSNVENTEFEAISTKIFTDELGFSGKHLGGSNKPDGLLWDDDCAIILDSKAYSEGFPLTASHTDAMGRYLRQFTERKEEIKPTWWDIAPEHLDNTYFAYVSGSFSGNYKEQLQKFRQDTNHLGGALEFVKLLLLANNYKTQKMSKKEVKKSILDYNISYEEYAPLLAEIE</sequence>
<gene>
    <name type="primary">stsIR</name>
</gene>